<evidence type="ECO:0000250" key="1"/>
<evidence type="ECO:0000255" key="2">
    <source>
        <dbReference type="PROSITE-ProRule" id="PRU01082"/>
    </source>
</evidence>
<evidence type="ECO:0000256" key="3">
    <source>
        <dbReference type="SAM" id="MobiDB-lite"/>
    </source>
</evidence>
<evidence type="ECO:0000305" key="4"/>
<name>P2C08_ORYSJ</name>
<sequence>MSSDTSRRDHAAMAVREVLAGDRKVGTVSRSARRRRLELRRLGRTASAVAEDDAAKRVRPASDSSSDSSESAKVAPEPTAEVARWPACVSHGAVSVIGRRREMEDAIFVAAPFLAASKEAAVEGSGVAEEEGKEEDEGFFAVYDGHGGSRVAEACRERMHVVLAEEVRVRRLLQGGGGGADVEDEDRARWKEAMAACFTRVDGEVGGAEEADTGEQTVGSTAVVAVVGPRRIVVANCGDSRAVLSRGGVAVPLSSDHKPDRPDEMERVEAAGGRVINWNGYRILGVLATSRSIGDYYLKPYVIAEPEVTVMDRTDKDEFLILASDGLWDVVSNDVACKIARNCLSGRAASKYPESVSGSTAADAAALLVELAISRGSKDNISVVVVELRRLRSRTTASKENGR</sequence>
<comment type="catalytic activity">
    <reaction>
        <text>O-phospho-L-seryl-[protein] + H2O = L-seryl-[protein] + phosphate</text>
        <dbReference type="Rhea" id="RHEA:20629"/>
        <dbReference type="Rhea" id="RHEA-COMP:9863"/>
        <dbReference type="Rhea" id="RHEA-COMP:11604"/>
        <dbReference type="ChEBI" id="CHEBI:15377"/>
        <dbReference type="ChEBI" id="CHEBI:29999"/>
        <dbReference type="ChEBI" id="CHEBI:43474"/>
        <dbReference type="ChEBI" id="CHEBI:83421"/>
        <dbReference type="EC" id="3.1.3.16"/>
    </reaction>
</comment>
<comment type="catalytic activity">
    <reaction>
        <text>O-phospho-L-threonyl-[protein] + H2O = L-threonyl-[protein] + phosphate</text>
        <dbReference type="Rhea" id="RHEA:47004"/>
        <dbReference type="Rhea" id="RHEA-COMP:11060"/>
        <dbReference type="Rhea" id="RHEA-COMP:11605"/>
        <dbReference type="ChEBI" id="CHEBI:15377"/>
        <dbReference type="ChEBI" id="CHEBI:30013"/>
        <dbReference type="ChEBI" id="CHEBI:43474"/>
        <dbReference type="ChEBI" id="CHEBI:61977"/>
        <dbReference type="EC" id="3.1.3.16"/>
    </reaction>
</comment>
<comment type="cofactor">
    <cofactor evidence="1">
        <name>Mg(2+)</name>
        <dbReference type="ChEBI" id="CHEBI:18420"/>
    </cofactor>
    <cofactor evidence="1">
        <name>Mn(2+)</name>
        <dbReference type="ChEBI" id="CHEBI:29035"/>
    </cofactor>
    <text evidence="1">Binds 2 magnesium or manganese ions per subunit.</text>
</comment>
<comment type="similarity">
    <text evidence="4">Belongs to the PP2C family.</text>
</comment>
<feature type="chain" id="PRO_0000363254" description="Probable protein phosphatase 2C 8">
    <location>
        <begin position="1"/>
        <end position="403"/>
    </location>
</feature>
<feature type="domain" description="PPM-type phosphatase" evidence="2">
    <location>
        <begin position="90"/>
        <end position="388"/>
    </location>
</feature>
<feature type="region of interest" description="Disordered" evidence="3">
    <location>
        <begin position="42"/>
        <end position="80"/>
    </location>
</feature>
<feature type="compositionally biased region" description="Low complexity" evidence="3">
    <location>
        <begin position="62"/>
        <end position="71"/>
    </location>
</feature>
<feature type="binding site" evidence="1">
    <location>
        <position position="144"/>
    </location>
    <ligand>
        <name>Mn(2+)</name>
        <dbReference type="ChEBI" id="CHEBI:29035"/>
        <label>1</label>
    </ligand>
</feature>
<feature type="binding site" evidence="1">
    <location>
        <position position="144"/>
    </location>
    <ligand>
        <name>Mn(2+)</name>
        <dbReference type="ChEBI" id="CHEBI:29035"/>
        <label>2</label>
    </ligand>
</feature>
<feature type="binding site" evidence="1">
    <location>
        <position position="145"/>
    </location>
    <ligand>
        <name>Mn(2+)</name>
        <dbReference type="ChEBI" id="CHEBI:29035"/>
        <label>1</label>
    </ligand>
</feature>
<feature type="binding site" evidence="1">
    <location>
        <position position="325"/>
    </location>
    <ligand>
        <name>Mn(2+)</name>
        <dbReference type="ChEBI" id="CHEBI:29035"/>
        <label>2</label>
    </ligand>
</feature>
<feature type="binding site" evidence="1">
    <location>
        <position position="379"/>
    </location>
    <ligand>
        <name>Mn(2+)</name>
        <dbReference type="ChEBI" id="CHEBI:29035"/>
        <label>2</label>
    </ligand>
</feature>
<dbReference type="EC" id="3.1.3.16"/>
<dbReference type="EMBL" id="AP003212">
    <property type="protein sequence ID" value="BAD72331.1"/>
    <property type="molecule type" value="Genomic_DNA"/>
</dbReference>
<dbReference type="EMBL" id="AP008207">
    <property type="protein sequence ID" value="BAF05668.1"/>
    <property type="molecule type" value="Genomic_DNA"/>
</dbReference>
<dbReference type="EMBL" id="AP014957">
    <property type="protein sequence ID" value="BAS73501.1"/>
    <property type="molecule type" value="Genomic_DNA"/>
</dbReference>
<dbReference type="EMBL" id="AK068272">
    <property type="protein sequence ID" value="BAG90835.1"/>
    <property type="molecule type" value="mRNA"/>
</dbReference>
<dbReference type="RefSeq" id="XP_015614087.1">
    <property type="nucleotide sequence ID" value="XM_015758601.1"/>
</dbReference>
<dbReference type="SMR" id="Q5SN75"/>
<dbReference type="BioGRID" id="793219">
    <property type="interactions" value="1"/>
</dbReference>
<dbReference type="FunCoup" id="Q5SN75">
    <property type="interactions" value="207"/>
</dbReference>
<dbReference type="STRING" id="39947.Q5SN75"/>
<dbReference type="PaxDb" id="39947-Q5SN75"/>
<dbReference type="EnsemblPlants" id="Os01t0656200-01">
    <property type="protein sequence ID" value="Os01t0656200-01"/>
    <property type="gene ID" value="Os01g0656200"/>
</dbReference>
<dbReference type="Gramene" id="Os01t0656200-01">
    <property type="protein sequence ID" value="Os01t0656200-01"/>
    <property type="gene ID" value="Os01g0656200"/>
</dbReference>
<dbReference type="KEGG" id="dosa:Os01g0656200"/>
<dbReference type="eggNOG" id="KOG0698">
    <property type="taxonomic scope" value="Eukaryota"/>
</dbReference>
<dbReference type="HOGENOM" id="CLU_013173_20_0_1"/>
<dbReference type="InParanoid" id="Q5SN75"/>
<dbReference type="OMA" id="DKRTEND"/>
<dbReference type="OrthoDB" id="10264738at2759"/>
<dbReference type="Proteomes" id="UP000000763">
    <property type="component" value="Chromosome 1"/>
</dbReference>
<dbReference type="Proteomes" id="UP000059680">
    <property type="component" value="Chromosome 1"/>
</dbReference>
<dbReference type="GO" id="GO:0046872">
    <property type="term" value="F:metal ion binding"/>
    <property type="evidence" value="ECO:0007669"/>
    <property type="project" value="UniProtKB-KW"/>
</dbReference>
<dbReference type="GO" id="GO:0004722">
    <property type="term" value="F:protein serine/threonine phosphatase activity"/>
    <property type="evidence" value="ECO:0000318"/>
    <property type="project" value="GO_Central"/>
</dbReference>
<dbReference type="GO" id="GO:1902531">
    <property type="term" value="P:regulation of intracellular signal transduction"/>
    <property type="evidence" value="ECO:0000318"/>
    <property type="project" value="GO_Central"/>
</dbReference>
<dbReference type="CDD" id="cd00143">
    <property type="entry name" value="PP2Cc"/>
    <property type="match status" value="1"/>
</dbReference>
<dbReference type="FunFam" id="3.60.40.10:FF:000041">
    <property type="entry name" value="Protein phosphatase 2C 51"/>
    <property type="match status" value="1"/>
</dbReference>
<dbReference type="Gene3D" id="3.60.40.10">
    <property type="entry name" value="PPM-type phosphatase domain"/>
    <property type="match status" value="1"/>
</dbReference>
<dbReference type="InterPro" id="IPR015655">
    <property type="entry name" value="PP2C"/>
</dbReference>
<dbReference type="InterPro" id="IPR000222">
    <property type="entry name" value="PP2C_BS"/>
</dbReference>
<dbReference type="InterPro" id="IPR036457">
    <property type="entry name" value="PPM-type-like_dom_sf"/>
</dbReference>
<dbReference type="InterPro" id="IPR001932">
    <property type="entry name" value="PPM-type_phosphatase-like_dom"/>
</dbReference>
<dbReference type="PANTHER" id="PTHR47992">
    <property type="entry name" value="PROTEIN PHOSPHATASE"/>
    <property type="match status" value="1"/>
</dbReference>
<dbReference type="Pfam" id="PF00481">
    <property type="entry name" value="PP2C"/>
    <property type="match status" value="1"/>
</dbReference>
<dbReference type="SMART" id="SM00331">
    <property type="entry name" value="PP2C_SIG"/>
    <property type="match status" value="1"/>
</dbReference>
<dbReference type="SMART" id="SM00332">
    <property type="entry name" value="PP2Cc"/>
    <property type="match status" value="1"/>
</dbReference>
<dbReference type="SUPFAM" id="SSF81606">
    <property type="entry name" value="PP2C-like"/>
    <property type="match status" value="1"/>
</dbReference>
<dbReference type="PROSITE" id="PS01032">
    <property type="entry name" value="PPM_1"/>
    <property type="match status" value="1"/>
</dbReference>
<dbReference type="PROSITE" id="PS51746">
    <property type="entry name" value="PPM_2"/>
    <property type="match status" value="1"/>
</dbReference>
<organism>
    <name type="scientific">Oryza sativa subsp. japonica</name>
    <name type="common">Rice</name>
    <dbReference type="NCBI Taxonomy" id="39947"/>
    <lineage>
        <taxon>Eukaryota</taxon>
        <taxon>Viridiplantae</taxon>
        <taxon>Streptophyta</taxon>
        <taxon>Embryophyta</taxon>
        <taxon>Tracheophyta</taxon>
        <taxon>Spermatophyta</taxon>
        <taxon>Magnoliopsida</taxon>
        <taxon>Liliopsida</taxon>
        <taxon>Poales</taxon>
        <taxon>Poaceae</taxon>
        <taxon>BOP clade</taxon>
        <taxon>Oryzoideae</taxon>
        <taxon>Oryzeae</taxon>
        <taxon>Oryzinae</taxon>
        <taxon>Oryza</taxon>
        <taxon>Oryza sativa</taxon>
    </lineage>
</organism>
<reference key="1">
    <citation type="journal article" date="2002" name="Nature">
        <title>The genome sequence and structure of rice chromosome 1.</title>
        <authorList>
            <person name="Sasaki T."/>
            <person name="Matsumoto T."/>
            <person name="Yamamoto K."/>
            <person name="Sakata K."/>
            <person name="Baba T."/>
            <person name="Katayose Y."/>
            <person name="Wu J."/>
            <person name="Niimura Y."/>
            <person name="Cheng Z."/>
            <person name="Nagamura Y."/>
            <person name="Antonio B.A."/>
            <person name="Kanamori H."/>
            <person name="Hosokawa S."/>
            <person name="Masukawa M."/>
            <person name="Arikawa K."/>
            <person name="Chiden Y."/>
            <person name="Hayashi M."/>
            <person name="Okamoto M."/>
            <person name="Ando T."/>
            <person name="Aoki H."/>
            <person name="Arita K."/>
            <person name="Hamada M."/>
            <person name="Harada C."/>
            <person name="Hijishita S."/>
            <person name="Honda M."/>
            <person name="Ichikawa Y."/>
            <person name="Idonuma A."/>
            <person name="Iijima M."/>
            <person name="Ikeda M."/>
            <person name="Ikeno M."/>
            <person name="Ito S."/>
            <person name="Ito T."/>
            <person name="Ito Y."/>
            <person name="Ito Y."/>
            <person name="Iwabuchi A."/>
            <person name="Kamiya K."/>
            <person name="Karasawa W."/>
            <person name="Katagiri S."/>
            <person name="Kikuta A."/>
            <person name="Kobayashi N."/>
            <person name="Kono I."/>
            <person name="Machita K."/>
            <person name="Maehara T."/>
            <person name="Mizuno H."/>
            <person name="Mizubayashi T."/>
            <person name="Mukai Y."/>
            <person name="Nagasaki H."/>
            <person name="Nakashima M."/>
            <person name="Nakama Y."/>
            <person name="Nakamichi Y."/>
            <person name="Nakamura M."/>
            <person name="Namiki N."/>
            <person name="Negishi M."/>
            <person name="Ohta I."/>
            <person name="Ono N."/>
            <person name="Saji S."/>
            <person name="Sakai K."/>
            <person name="Shibata M."/>
            <person name="Shimokawa T."/>
            <person name="Shomura A."/>
            <person name="Song J."/>
            <person name="Takazaki Y."/>
            <person name="Terasawa K."/>
            <person name="Tsuji K."/>
            <person name="Waki K."/>
            <person name="Yamagata H."/>
            <person name="Yamane H."/>
            <person name="Yoshiki S."/>
            <person name="Yoshihara R."/>
            <person name="Yukawa K."/>
            <person name="Zhong H."/>
            <person name="Iwama H."/>
            <person name="Endo T."/>
            <person name="Ito H."/>
            <person name="Hahn J.H."/>
            <person name="Kim H.-I."/>
            <person name="Eun M.-Y."/>
            <person name="Yano M."/>
            <person name="Jiang J."/>
            <person name="Gojobori T."/>
        </authorList>
    </citation>
    <scope>NUCLEOTIDE SEQUENCE [LARGE SCALE GENOMIC DNA]</scope>
    <source>
        <strain>cv. Nipponbare</strain>
    </source>
</reference>
<reference key="2">
    <citation type="journal article" date="2005" name="Nature">
        <title>The map-based sequence of the rice genome.</title>
        <authorList>
            <consortium name="International rice genome sequencing project (IRGSP)"/>
        </authorList>
    </citation>
    <scope>NUCLEOTIDE SEQUENCE [LARGE SCALE GENOMIC DNA]</scope>
    <source>
        <strain>cv. Nipponbare</strain>
    </source>
</reference>
<reference key="3">
    <citation type="journal article" date="2008" name="Nucleic Acids Res.">
        <title>The rice annotation project database (RAP-DB): 2008 update.</title>
        <authorList>
            <consortium name="The rice annotation project (RAP)"/>
        </authorList>
    </citation>
    <scope>GENOME REANNOTATION</scope>
    <source>
        <strain>cv. Nipponbare</strain>
    </source>
</reference>
<reference key="4">
    <citation type="journal article" date="2013" name="Rice">
        <title>Improvement of the Oryza sativa Nipponbare reference genome using next generation sequence and optical map data.</title>
        <authorList>
            <person name="Kawahara Y."/>
            <person name="de la Bastide M."/>
            <person name="Hamilton J.P."/>
            <person name="Kanamori H."/>
            <person name="McCombie W.R."/>
            <person name="Ouyang S."/>
            <person name="Schwartz D.C."/>
            <person name="Tanaka T."/>
            <person name="Wu J."/>
            <person name="Zhou S."/>
            <person name="Childs K.L."/>
            <person name="Davidson R.M."/>
            <person name="Lin H."/>
            <person name="Quesada-Ocampo L."/>
            <person name="Vaillancourt B."/>
            <person name="Sakai H."/>
            <person name="Lee S.S."/>
            <person name="Kim J."/>
            <person name="Numa H."/>
            <person name="Itoh T."/>
            <person name="Buell C.R."/>
            <person name="Matsumoto T."/>
        </authorList>
    </citation>
    <scope>GENOME REANNOTATION</scope>
    <source>
        <strain>cv. Nipponbare</strain>
    </source>
</reference>
<reference key="5">
    <citation type="journal article" date="2003" name="Science">
        <title>Collection, mapping, and annotation of over 28,000 cDNA clones from japonica rice.</title>
        <authorList>
            <consortium name="The rice full-length cDNA consortium"/>
        </authorList>
    </citation>
    <scope>NUCLEOTIDE SEQUENCE [LARGE SCALE MRNA]</scope>
    <source>
        <strain>cv. Nipponbare</strain>
    </source>
</reference>
<reference key="6">
    <citation type="journal article" date="2008" name="BMC Genomics">
        <title>Genome-wide and expression analysis of protein phosphatase 2C in rice and Arabidopsis.</title>
        <authorList>
            <person name="Xue T."/>
            <person name="Wang D."/>
            <person name="Zhang S."/>
            <person name="Ehlting J."/>
            <person name="Ni F."/>
            <person name="Jacab S."/>
            <person name="Zheng C."/>
            <person name="Zhong Y."/>
        </authorList>
    </citation>
    <scope>GENE FAMILY</scope>
    <scope>NOMENCLATURE</scope>
</reference>
<keyword id="KW-0378">Hydrolase</keyword>
<keyword id="KW-0460">Magnesium</keyword>
<keyword id="KW-0464">Manganese</keyword>
<keyword id="KW-0479">Metal-binding</keyword>
<keyword id="KW-0904">Protein phosphatase</keyword>
<keyword id="KW-1185">Reference proteome</keyword>
<gene>
    <name type="ordered locus">Os01g0656200</name>
    <name type="ordered locus">LOC_Os01g46760</name>
    <name type="ORF">OSJNBa0049H05.30</name>
</gene>
<proteinExistence type="evidence at transcript level"/>
<protein>
    <recommendedName>
        <fullName>Probable protein phosphatase 2C 8</fullName>
        <shortName>OsPP2C08</shortName>
        <ecNumber>3.1.3.16</ecNumber>
    </recommendedName>
</protein>
<accession>Q5SN75</accession>
<accession>A0A0P0V628</accession>